<gene>
    <name evidence="1" type="primary">rsmH</name>
    <name type="synonym">mraW</name>
    <name type="ordered locus">HEAR2819</name>
</gene>
<accession>A4G8U6</accession>
<protein>
    <recommendedName>
        <fullName evidence="1">Ribosomal RNA small subunit methyltransferase H</fullName>
        <ecNumber evidence="1">2.1.1.199</ecNumber>
    </recommendedName>
    <alternativeName>
        <fullName evidence="1">16S rRNA m(4)C1402 methyltransferase</fullName>
    </alternativeName>
    <alternativeName>
        <fullName evidence="1">rRNA (cytosine-N(4)-)-methyltransferase RsmH</fullName>
    </alternativeName>
</protein>
<sequence>MNVEAVQQYQHRTVLLEEAVDALALDGERANGMYVDGTFGRGGHSRLILQRLGENGCLLAFDKDTQAIANAATIEDKRFAIVHDSFATLSTALAERGIAQVNGVLLDLGISSPQVDDAARGFSFRADGPLDMRMDTTRGISAAEWLATETEQKIEKVIREYGEERFAFQIAKAIVAGRAVQPISSTRQLAEIVARAVKTREKGKDPATRTFQAIRIFINQELEELEVVLNEAYRHLAPHGRLVVISFHSLEDRIVKQFMASKANVPQPDRRLPIRAVDLPQPEMKLIARIKPSAAEISANPRARSAVMRVAERLPTPGAAS</sequence>
<comment type="function">
    <text evidence="1">Specifically methylates the N4 position of cytidine in position 1402 (C1402) of 16S rRNA.</text>
</comment>
<comment type="catalytic activity">
    <reaction evidence="1">
        <text>cytidine(1402) in 16S rRNA + S-adenosyl-L-methionine = N(4)-methylcytidine(1402) in 16S rRNA + S-adenosyl-L-homocysteine + H(+)</text>
        <dbReference type="Rhea" id="RHEA:42928"/>
        <dbReference type="Rhea" id="RHEA-COMP:10286"/>
        <dbReference type="Rhea" id="RHEA-COMP:10287"/>
        <dbReference type="ChEBI" id="CHEBI:15378"/>
        <dbReference type="ChEBI" id="CHEBI:57856"/>
        <dbReference type="ChEBI" id="CHEBI:59789"/>
        <dbReference type="ChEBI" id="CHEBI:74506"/>
        <dbReference type="ChEBI" id="CHEBI:82748"/>
        <dbReference type="EC" id="2.1.1.199"/>
    </reaction>
</comment>
<comment type="subcellular location">
    <subcellularLocation>
        <location evidence="1">Cytoplasm</location>
    </subcellularLocation>
</comment>
<comment type="similarity">
    <text evidence="1">Belongs to the methyltransferase superfamily. RsmH family.</text>
</comment>
<evidence type="ECO:0000255" key="1">
    <source>
        <dbReference type="HAMAP-Rule" id="MF_01007"/>
    </source>
</evidence>
<name>RSMH_HERAR</name>
<feature type="chain" id="PRO_0000386928" description="Ribosomal RNA small subunit methyltransferase H">
    <location>
        <begin position="1"/>
        <end position="321"/>
    </location>
</feature>
<feature type="binding site" evidence="1">
    <location>
        <begin position="42"/>
        <end position="44"/>
    </location>
    <ligand>
        <name>S-adenosyl-L-methionine</name>
        <dbReference type="ChEBI" id="CHEBI:59789"/>
    </ligand>
</feature>
<feature type="binding site" evidence="1">
    <location>
        <position position="62"/>
    </location>
    <ligand>
        <name>S-adenosyl-L-methionine</name>
        <dbReference type="ChEBI" id="CHEBI:59789"/>
    </ligand>
</feature>
<feature type="binding site" evidence="1">
    <location>
        <position position="86"/>
    </location>
    <ligand>
        <name>S-adenosyl-L-methionine</name>
        <dbReference type="ChEBI" id="CHEBI:59789"/>
    </ligand>
</feature>
<feature type="binding site" evidence="1">
    <location>
        <position position="107"/>
    </location>
    <ligand>
        <name>S-adenosyl-L-methionine</name>
        <dbReference type="ChEBI" id="CHEBI:59789"/>
    </ligand>
</feature>
<feature type="binding site" evidence="1">
    <location>
        <position position="114"/>
    </location>
    <ligand>
        <name>S-adenosyl-L-methionine</name>
        <dbReference type="ChEBI" id="CHEBI:59789"/>
    </ligand>
</feature>
<proteinExistence type="inferred from homology"/>
<reference key="1">
    <citation type="journal article" date="2007" name="PLoS Genet.">
        <title>A tale of two oxidation states: bacterial colonization of arsenic-rich environments.</title>
        <authorList>
            <person name="Muller D."/>
            <person name="Medigue C."/>
            <person name="Koechler S."/>
            <person name="Barbe V."/>
            <person name="Barakat M."/>
            <person name="Talla E."/>
            <person name="Bonnefoy V."/>
            <person name="Krin E."/>
            <person name="Arsene-Ploetze F."/>
            <person name="Carapito C."/>
            <person name="Chandler M."/>
            <person name="Cournoyer B."/>
            <person name="Cruveiller S."/>
            <person name="Dossat C."/>
            <person name="Duval S."/>
            <person name="Heymann M."/>
            <person name="Leize E."/>
            <person name="Lieutaud A."/>
            <person name="Lievremont D."/>
            <person name="Makita Y."/>
            <person name="Mangenot S."/>
            <person name="Nitschke W."/>
            <person name="Ortet P."/>
            <person name="Perdrial N."/>
            <person name="Schoepp B."/>
            <person name="Siguier P."/>
            <person name="Simeonova D.D."/>
            <person name="Rouy Z."/>
            <person name="Segurens B."/>
            <person name="Turlin E."/>
            <person name="Vallenet D."/>
            <person name="van Dorsselaer A."/>
            <person name="Weiss S."/>
            <person name="Weissenbach J."/>
            <person name="Lett M.-C."/>
            <person name="Danchin A."/>
            <person name="Bertin P.N."/>
        </authorList>
    </citation>
    <scope>NUCLEOTIDE SEQUENCE [LARGE SCALE GENOMIC DNA]</scope>
    <source>
        <strain>ULPAs1</strain>
    </source>
</reference>
<organism>
    <name type="scientific">Herminiimonas arsenicoxydans</name>
    <dbReference type="NCBI Taxonomy" id="204773"/>
    <lineage>
        <taxon>Bacteria</taxon>
        <taxon>Pseudomonadati</taxon>
        <taxon>Pseudomonadota</taxon>
        <taxon>Betaproteobacteria</taxon>
        <taxon>Burkholderiales</taxon>
        <taxon>Oxalobacteraceae</taxon>
        <taxon>Herminiimonas</taxon>
    </lineage>
</organism>
<dbReference type="EC" id="2.1.1.199" evidence="1"/>
<dbReference type="EMBL" id="CU207211">
    <property type="protein sequence ID" value="CAL62933.1"/>
    <property type="molecule type" value="Genomic_DNA"/>
</dbReference>
<dbReference type="SMR" id="A4G8U6"/>
<dbReference type="STRING" id="204773.HEAR2819"/>
<dbReference type="KEGG" id="har:HEAR2819"/>
<dbReference type="eggNOG" id="COG0275">
    <property type="taxonomic scope" value="Bacteria"/>
</dbReference>
<dbReference type="HOGENOM" id="CLU_038422_2_0_4"/>
<dbReference type="OrthoDB" id="9806637at2"/>
<dbReference type="Proteomes" id="UP000006697">
    <property type="component" value="Chromosome"/>
</dbReference>
<dbReference type="GO" id="GO:0005737">
    <property type="term" value="C:cytoplasm"/>
    <property type="evidence" value="ECO:0007669"/>
    <property type="project" value="UniProtKB-SubCell"/>
</dbReference>
<dbReference type="GO" id="GO:0071424">
    <property type="term" value="F:rRNA (cytosine-N4-)-methyltransferase activity"/>
    <property type="evidence" value="ECO:0007669"/>
    <property type="project" value="UniProtKB-UniRule"/>
</dbReference>
<dbReference type="GO" id="GO:0070475">
    <property type="term" value="P:rRNA base methylation"/>
    <property type="evidence" value="ECO:0007669"/>
    <property type="project" value="UniProtKB-UniRule"/>
</dbReference>
<dbReference type="FunFam" id="1.10.150.170:FF:000001">
    <property type="entry name" value="Ribosomal RNA small subunit methyltransferase H"/>
    <property type="match status" value="1"/>
</dbReference>
<dbReference type="Gene3D" id="1.10.150.170">
    <property type="entry name" value="Putative methyltransferase TM0872, insert domain"/>
    <property type="match status" value="1"/>
</dbReference>
<dbReference type="Gene3D" id="3.40.50.150">
    <property type="entry name" value="Vaccinia Virus protein VP39"/>
    <property type="match status" value="1"/>
</dbReference>
<dbReference type="HAMAP" id="MF_01007">
    <property type="entry name" value="16SrRNA_methyltr_H"/>
    <property type="match status" value="1"/>
</dbReference>
<dbReference type="InterPro" id="IPR002903">
    <property type="entry name" value="RsmH"/>
</dbReference>
<dbReference type="InterPro" id="IPR023397">
    <property type="entry name" value="SAM-dep_MeTrfase_MraW_recog"/>
</dbReference>
<dbReference type="InterPro" id="IPR029063">
    <property type="entry name" value="SAM-dependent_MTases_sf"/>
</dbReference>
<dbReference type="NCBIfam" id="TIGR00006">
    <property type="entry name" value="16S rRNA (cytosine(1402)-N(4))-methyltransferase RsmH"/>
    <property type="match status" value="1"/>
</dbReference>
<dbReference type="PANTHER" id="PTHR11265:SF0">
    <property type="entry name" value="12S RRNA N4-METHYLCYTIDINE METHYLTRANSFERASE"/>
    <property type="match status" value="1"/>
</dbReference>
<dbReference type="PANTHER" id="PTHR11265">
    <property type="entry name" value="S-ADENOSYL-METHYLTRANSFERASE MRAW"/>
    <property type="match status" value="1"/>
</dbReference>
<dbReference type="Pfam" id="PF01795">
    <property type="entry name" value="Methyltransf_5"/>
    <property type="match status" value="1"/>
</dbReference>
<dbReference type="PIRSF" id="PIRSF004486">
    <property type="entry name" value="MraW"/>
    <property type="match status" value="1"/>
</dbReference>
<dbReference type="SUPFAM" id="SSF81799">
    <property type="entry name" value="Putative methyltransferase TM0872, insert domain"/>
    <property type="match status" value="1"/>
</dbReference>
<dbReference type="SUPFAM" id="SSF53335">
    <property type="entry name" value="S-adenosyl-L-methionine-dependent methyltransferases"/>
    <property type="match status" value="1"/>
</dbReference>
<keyword id="KW-0963">Cytoplasm</keyword>
<keyword id="KW-0489">Methyltransferase</keyword>
<keyword id="KW-1185">Reference proteome</keyword>
<keyword id="KW-0698">rRNA processing</keyword>
<keyword id="KW-0949">S-adenosyl-L-methionine</keyword>
<keyword id="KW-0808">Transferase</keyword>